<keyword id="KW-0687">Ribonucleoprotein</keyword>
<keyword id="KW-0689">Ribosomal protein</keyword>
<keyword id="KW-0694">RNA-binding</keyword>
<keyword id="KW-0699">rRNA-binding</keyword>
<comment type="function">
    <text evidence="1">This is one of the proteins that binds to the 5S RNA in the ribosome where it forms part of the central protuberance.</text>
</comment>
<comment type="subunit">
    <text evidence="1">Part of the 50S ribosomal subunit; part of the 5S rRNA/L5/L18/L25 subcomplex. Contacts the 5S rRNA. Binds to the 5S rRNA independently of L5 and L18.</text>
</comment>
<comment type="similarity">
    <text evidence="1">Belongs to the bacterial ribosomal protein bL25 family.</text>
</comment>
<reference key="1">
    <citation type="journal article" date="2004" name="Proc. Natl. Acad. Sci. U.S.A.">
        <title>Insights into the evolution of Yersinia pestis through whole-genome comparison with Yersinia pseudotuberculosis.</title>
        <authorList>
            <person name="Chain P.S.G."/>
            <person name="Carniel E."/>
            <person name="Larimer F.W."/>
            <person name="Lamerdin J."/>
            <person name="Stoutland P.O."/>
            <person name="Regala W.M."/>
            <person name="Georgescu A.M."/>
            <person name="Vergez L.M."/>
            <person name="Land M.L."/>
            <person name="Motin V.L."/>
            <person name="Brubaker R.R."/>
            <person name="Fowler J."/>
            <person name="Hinnebusch J."/>
            <person name="Marceau M."/>
            <person name="Medigue C."/>
            <person name="Simonet M."/>
            <person name="Chenal-Francisque V."/>
            <person name="Souza B."/>
            <person name="Dacheux D."/>
            <person name="Elliott J.M."/>
            <person name="Derbise A."/>
            <person name="Hauser L.J."/>
            <person name="Garcia E."/>
        </authorList>
    </citation>
    <scope>NUCLEOTIDE SEQUENCE [LARGE SCALE GENOMIC DNA]</scope>
    <source>
        <strain>IP32953</strain>
    </source>
</reference>
<evidence type="ECO:0000255" key="1">
    <source>
        <dbReference type="HAMAP-Rule" id="MF_01336"/>
    </source>
</evidence>
<evidence type="ECO:0000305" key="2"/>
<accession>Q66CV3</accession>
<proteinExistence type="inferred from homology"/>
<organism>
    <name type="scientific">Yersinia pseudotuberculosis serotype I (strain IP32953)</name>
    <dbReference type="NCBI Taxonomy" id="273123"/>
    <lineage>
        <taxon>Bacteria</taxon>
        <taxon>Pseudomonadati</taxon>
        <taxon>Pseudomonadota</taxon>
        <taxon>Gammaproteobacteria</taxon>
        <taxon>Enterobacterales</taxon>
        <taxon>Yersiniaceae</taxon>
        <taxon>Yersinia</taxon>
    </lineage>
</organism>
<feature type="chain" id="PRO_0000181504" description="Large ribosomal subunit protein bL25">
    <location>
        <begin position="1"/>
        <end position="94"/>
    </location>
</feature>
<protein>
    <recommendedName>
        <fullName evidence="1">Large ribosomal subunit protein bL25</fullName>
    </recommendedName>
    <alternativeName>
        <fullName evidence="2">50S ribosomal protein L25</fullName>
    </alternativeName>
</protein>
<dbReference type="EMBL" id="BX936398">
    <property type="protein sequence ID" value="CAH20539.1"/>
    <property type="molecule type" value="Genomic_DNA"/>
</dbReference>
<dbReference type="RefSeq" id="WP_002208834.1">
    <property type="nucleotide sequence ID" value="NZ_CP009712.1"/>
</dbReference>
<dbReference type="SMR" id="Q66CV3"/>
<dbReference type="GeneID" id="96664865"/>
<dbReference type="KEGG" id="ypo:BZ17_1222"/>
<dbReference type="KEGG" id="yps:YPTB1299"/>
<dbReference type="PATRIC" id="fig|273123.14.peg.1307"/>
<dbReference type="Proteomes" id="UP000001011">
    <property type="component" value="Chromosome"/>
</dbReference>
<dbReference type="GO" id="GO:0022625">
    <property type="term" value="C:cytosolic large ribosomal subunit"/>
    <property type="evidence" value="ECO:0007669"/>
    <property type="project" value="TreeGrafter"/>
</dbReference>
<dbReference type="GO" id="GO:0008097">
    <property type="term" value="F:5S rRNA binding"/>
    <property type="evidence" value="ECO:0007669"/>
    <property type="project" value="InterPro"/>
</dbReference>
<dbReference type="GO" id="GO:0003735">
    <property type="term" value="F:structural constituent of ribosome"/>
    <property type="evidence" value="ECO:0007669"/>
    <property type="project" value="InterPro"/>
</dbReference>
<dbReference type="GO" id="GO:0006412">
    <property type="term" value="P:translation"/>
    <property type="evidence" value="ECO:0007669"/>
    <property type="project" value="UniProtKB-UniRule"/>
</dbReference>
<dbReference type="CDD" id="cd00495">
    <property type="entry name" value="Ribosomal_L25_TL5_CTC"/>
    <property type="match status" value="1"/>
</dbReference>
<dbReference type="FunFam" id="2.40.240.10:FF:000002">
    <property type="entry name" value="50S ribosomal protein L25"/>
    <property type="match status" value="1"/>
</dbReference>
<dbReference type="Gene3D" id="2.40.240.10">
    <property type="entry name" value="Ribosomal Protein L25, Chain P"/>
    <property type="match status" value="1"/>
</dbReference>
<dbReference type="HAMAP" id="MF_01336">
    <property type="entry name" value="Ribosomal_bL25"/>
    <property type="match status" value="1"/>
</dbReference>
<dbReference type="InterPro" id="IPR020056">
    <property type="entry name" value="Rbsml_bL25/Gln-tRNA_synth_N"/>
</dbReference>
<dbReference type="InterPro" id="IPR011035">
    <property type="entry name" value="Ribosomal_bL25/Gln-tRNA_synth"/>
</dbReference>
<dbReference type="InterPro" id="IPR020055">
    <property type="entry name" value="Ribosomal_bL25_short"/>
</dbReference>
<dbReference type="InterPro" id="IPR029751">
    <property type="entry name" value="Ribosomal_L25_dom"/>
</dbReference>
<dbReference type="InterPro" id="IPR020930">
    <property type="entry name" value="Ribosomal_uL5_bac-type"/>
</dbReference>
<dbReference type="NCBIfam" id="NF004612">
    <property type="entry name" value="PRK05943.1"/>
    <property type="match status" value="1"/>
</dbReference>
<dbReference type="PANTHER" id="PTHR33284">
    <property type="entry name" value="RIBOSOMAL PROTEIN L25/GLN-TRNA SYNTHETASE, ANTI-CODON-BINDING DOMAIN-CONTAINING PROTEIN"/>
    <property type="match status" value="1"/>
</dbReference>
<dbReference type="PANTHER" id="PTHR33284:SF1">
    <property type="entry name" value="RIBOSOMAL PROTEIN L25_GLN-TRNA SYNTHETASE, ANTI-CODON-BINDING DOMAIN-CONTAINING PROTEIN"/>
    <property type="match status" value="1"/>
</dbReference>
<dbReference type="Pfam" id="PF01386">
    <property type="entry name" value="Ribosomal_L25p"/>
    <property type="match status" value="1"/>
</dbReference>
<dbReference type="SUPFAM" id="SSF50715">
    <property type="entry name" value="Ribosomal protein L25-like"/>
    <property type="match status" value="1"/>
</dbReference>
<name>RL25_YERPS</name>
<sequence length="94" mass="10406">MTTINVEVRNDQGKGASRRLRAANKFPAIVYGGSEAAISIALDHDTTKNLELKPGFYDSVLTLVIDGKETKVKVQAVQRHAFKPKLTHIDFVRV</sequence>
<gene>
    <name evidence="1" type="primary">rplY</name>
    <name type="ordered locus">YPTB1299</name>
</gene>